<sequence length="217" mass="24430">MLNISIAIDGPAGAGKSTIAKIIGNKLNIMYINTGSMYRAVTLMALKNNIEPYDIESLKALINSMNISFNGNNIIVNGKDLEEDIRMPIINNNVSKYAAVEEVRELLVSMQQNISKKYNVVMDGRDIGTVVLKDAPYKFFITASAEVRAKRRLKELEEKGINISFQDVLKEIKERDYIDSNRKVNPLKQSKDAILIDTSNFTIEEVVDKICNIIKRD</sequence>
<keyword id="KW-0067">ATP-binding</keyword>
<keyword id="KW-0963">Cytoplasm</keyword>
<keyword id="KW-0418">Kinase</keyword>
<keyword id="KW-0547">Nucleotide-binding</keyword>
<keyword id="KW-0808">Transferase</keyword>
<reference key="1">
    <citation type="submission" date="2007-06" db="EMBL/GenBank/DDBJ databases">
        <authorList>
            <person name="Brinkac L.M."/>
            <person name="Daugherty S."/>
            <person name="Dodson R.J."/>
            <person name="Madupu R."/>
            <person name="Brown J.L."/>
            <person name="Bruce D."/>
            <person name="Detter C."/>
            <person name="Munk C."/>
            <person name="Smith L.A."/>
            <person name="Smith T.J."/>
            <person name="White O."/>
            <person name="Brettin T.S."/>
        </authorList>
    </citation>
    <scope>NUCLEOTIDE SEQUENCE [LARGE SCALE GENOMIC DNA]</scope>
    <source>
        <strain>Langeland / NCTC 10281 / Type F</strain>
    </source>
</reference>
<protein>
    <recommendedName>
        <fullName evidence="1">Cytidylate kinase</fullName>
        <shortName evidence="1">CK</shortName>
        <ecNumber evidence="1">2.7.4.25</ecNumber>
    </recommendedName>
    <alternativeName>
        <fullName evidence="1">Cytidine monophosphate kinase</fullName>
        <shortName evidence="1">CMP kinase</shortName>
    </alternativeName>
</protein>
<gene>
    <name evidence="1" type="primary">cmk</name>
    <name type="ordered locus">CLI_1803</name>
</gene>
<evidence type="ECO:0000255" key="1">
    <source>
        <dbReference type="HAMAP-Rule" id="MF_00238"/>
    </source>
</evidence>
<organism>
    <name type="scientific">Clostridium botulinum (strain Langeland / NCTC 10281 / Type F)</name>
    <dbReference type="NCBI Taxonomy" id="441772"/>
    <lineage>
        <taxon>Bacteria</taxon>
        <taxon>Bacillati</taxon>
        <taxon>Bacillota</taxon>
        <taxon>Clostridia</taxon>
        <taxon>Eubacteriales</taxon>
        <taxon>Clostridiaceae</taxon>
        <taxon>Clostridium</taxon>
    </lineage>
</organism>
<proteinExistence type="inferred from homology"/>
<feature type="chain" id="PRO_1000125282" description="Cytidylate kinase">
    <location>
        <begin position="1"/>
        <end position="217"/>
    </location>
</feature>
<feature type="binding site" evidence="1">
    <location>
        <begin position="10"/>
        <end position="18"/>
    </location>
    <ligand>
        <name>ATP</name>
        <dbReference type="ChEBI" id="CHEBI:30616"/>
    </ligand>
</feature>
<accession>A7GE53</accession>
<name>KCY_CLOBL</name>
<comment type="catalytic activity">
    <reaction evidence="1">
        <text>CMP + ATP = CDP + ADP</text>
        <dbReference type="Rhea" id="RHEA:11600"/>
        <dbReference type="ChEBI" id="CHEBI:30616"/>
        <dbReference type="ChEBI" id="CHEBI:58069"/>
        <dbReference type="ChEBI" id="CHEBI:60377"/>
        <dbReference type="ChEBI" id="CHEBI:456216"/>
        <dbReference type="EC" id="2.7.4.25"/>
    </reaction>
</comment>
<comment type="catalytic activity">
    <reaction evidence="1">
        <text>dCMP + ATP = dCDP + ADP</text>
        <dbReference type="Rhea" id="RHEA:25094"/>
        <dbReference type="ChEBI" id="CHEBI:30616"/>
        <dbReference type="ChEBI" id="CHEBI:57566"/>
        <dbReference type="ChEBI" id="CHEBI:58593"/>
        <dbReference type="ChEBI" id="CHEBI:456216"/>
        <dbReference type="EC" id="2.7.4.25"/>
    </reaction>
</comment>
<comment type="subcellular location">
    <subcellularLocation>
        <location evidence="1">Cytoplasm</location>
    </subcellularLocation>
</comment>
<comment type="similarity">
    <text evidence="1">Belongs to the cytidylate kinase family. Type 1 subfamily.</text>
</comment>
<dbReference type="EC" id="2.7.4.25" evidence="1"/>
<dbReference type="EMBL" id="CP000728">
    <property type="protein sequence ID" value="ABS42323.1"/>
    <property type="molecule type" value="Genomic_DNA"/>
</dbReference>
<dbReference type="RefSeq" id="WP_012099797.1">
    <property type="nucleotide sequence ID" value="NC_009699.1"/>
</dbReference>
<dbReference type="SMR" id="A7GE53"/>
<dbReference type="KEGG" id="cbf:CLI_1803"/>
<dbReference type="HOGENOM" id="CLU_079959_0_2_9"/>
<dbReference type="Proteomes" id="UP000002410">
    <property type="component" value="Chromosome"/>
</dbReference>
<dbReference type="GO" id="GO:0005829">
    <property type="term" value="C:cytosol"/>
    <property type="evidence" value="ECO:0007669"/>
    <property type="project" value="TreeGrafter"/>
</dbReference>
<dbReference type="GO" id="GO:0005524">
    <property type="term" value="F:ATP binding"/>
    <property type="evidence" value="ECO:0007669"/>
    <property type="project" value="UniProtKB-UniRule"/>
</dbReference>
<dbReference type="GO" id="GO:0036430">
    <property type="term" value="F:CMP kinase activity"/>
    <property type="evidence" value="ECO:0007669"/>
    <property type="project" value="RHEA"/>
</dbReference>
<dbReference type="GO" id="GO:0036431">
    <property type="term" value="F:dCMP kinase activity"/>
    <property type="evidence" value="ECO:0007669"/>
    <property type="project" value="RHEA"/>
</dbReference>
<dbReference type="GO" id="GO:0015949">
    <property type="term" value="P:nucleobase-containing small molecule interconversion"/>
    <property type="evidence" value="ECO:0007669"/>
    <property type="project" value="TreeGrafter"/>
</dbReference>
<dbReference type="GO" id="GO:0006220">
    <property type="term" value="P:pyrimidine nucleotide metabolic process"/>
    <property type="evidence" value="ECO:0007669"/>
    <property type="project" value="UniProtKB-UniRule"/>
</dbReference>
<dbReference type="CDD" id="cd02020">
    <property type="entry name" value="CMPK"/>
    <property type="match status" value="1"/>
</dbReference>
<dbReference type="FunFam" id="3.40.50.300:FF:002511">
    <property type="entry name" value="Cytidylate kinase"/>
    <property type="match status" value="1"/>
</dbReference>
<dbReference type="Gene3D" id="3.40.50.300">
    <property type="entry name" value="P-loop containing nucleotide triphosphate hydrolases"/>
    <property type="match status" value="1"/>
</dbReference>
<dbReference type="HAMAP" id="MF_00238">
    <property type="entry name" value="Cytidyl_kinase_type1"/>
    <property type="match status" value="1"/>
</dbReference>
<dbReference type="InterPro" id="IPR003136">
    <property type="entry name" value="Cytidylate_kin"/>
</dbReference>
<dbReference type="InterPro" id="IPR011994">
    <property type="entry name" value="Cytidylate_kinase_dom"/>
</dbReference>
<dbReference type="InterPro" id="IPR027417">
    <property type="entry name" value="P-loop_NTPase"/>
</dbReference>
<dbReference type="NCBIfam" id="TIGR00017">
    <property type="entry name" value="cmk"/>
    <property type="match status" value="1"/>
</dbReference>
<dbReference type="PANTHER" id="PTHR21299:SF2">
    <property type="entry name" value="CYTIDYLATE KINASE"/>
    <property type="match status" value="1"/>
</dbReference>
<dbReference type="PANTHER" id="PTHR21299">
    <property type="entry name" value="CYTIDYLATE KINASE/PANTOATE-BETA-ALANINE LIGASE"/>
    <property type="match status" value="1"/>
</dbReference>
<dbReference type="Pfam" id="PF02224">
    <property type="entry name" value="Cytidylate_kin"/>
    <property type="match status" value="1"/>
</dbReference>
<dbReference type="SUPFAM" id="SSF52540">
    <property type="entry name" value="P-loop containing nucleoside triphosphate hydrolases"/>
    <property type="match status" value="1"/>
</dbReference>